<comment type="subcellular location">
    <subcellularLocation>
        <location evidence="1">Cell inner membrane</location>
        <topology evidence="1">Multi-pass membrane protein</topology>
    </subcellularLocation>
</comment>
<comment type="similarity">
    <text evidence="1">Belongs to the UPF0266 family.</text>
</comment>
<name>YOBD_SALAR</name>
<evidence type="ECO:0000255" key="1">
    <source>
        <dbReference type="HAMAP-Rule" id="MF_01071"/>
    </source>
</evidence>
<organism>
    <name type="scientific">Salmonella arizonae (strain ATCC BAA-731 / CDC346-86 / RSK2980)</name>
    <dbReference type="NCBI Taxonomy" id="41514"/>
    <lineage>
        <taxon>Bacteria</taxon>
        <taxon>Pseudomonadati</taxon>
        <taxon>Pseudomonadota</taxon>
        <taxon>Gammaproteobacteria</taxon>
        <taxon>Enterobacterales</taxon>
        <taxon>Enterobacteriaceae</taxon>
        <taxon>Salmonella</taxon>
    </lineage>
</organism>
<keyword id="KW-0997">Cell inner membrane</keyword>
<keyword id="KW-1003">Cell membrane</keyword>
<keyword id="KW-0472">Membrane</keyword>
<keyword id="KW-1185">Reference proteome</keyword>
<keyword id="KW-0812">Transmembrane</keyword>
<keyword id="KW-1133">Transmembrane helix</keyword>
<gene>
    <name evidence="1" type="primary">yobD</name>
    <name type="ordered locus">SARI_01107</name>
</gene>
<sequence length="152" mass="17809">MTITDLVLILFIAALLAYALYDQFIMPRRNGPTQLSIALLRRSRVDSVIFVGLVAILIYNNVTSHGAQMTTWLLSALALMGFYIFWIRTPRIIFKQHGFFFANVWIEYNRIKEMNLSEDGVLVMQLEQRRLLIRVRNIDDLEKIYKLLIENQ</sequence>
<proteinExistence type="inferred from homology"/>
<feature type="chain" id="PRO_1000084497" description="UPF0266 membrane protein YobD">
    <location>
        <begin position="1"/>
        <end position="152"/>
    </location>
</feature>
<feature type="transmembrane region" description="Helical" evidence="1">
    <location>
        <begin position="6"/>
        <end position="26"/>
    </location>
</feature>
<feature type="transmembrane region" description="Helical" evidence="1">
    <location>
        <begin position="45"/>
        <end position="65"/>
    </location>
</feature>
<feature type="transmembrane region" description="Helical" evidence="1">
    <location>
        <begin position="67"/>
        <end position="87"/>
    </location>
</feature>
<reference key="1">
    <citation type="submission" date="2007-11" db="EMBL/GenBank/DDBJ databases">
        <authorList>
            <consortium name="The Salmonella enterica serovar Arizonae Genome Sequencing Project"/>
            <person name="McClelland M."/>
            <person name="Sanderson E.K."/>
            <person name="Porwollik S."/>
            <person name="Spieth J."/>
            <person name="Clifton W.S."/>
            <person name="Fulton R."/>
            <person name="Chunyan W."/>
            <person name="Wollam A."/>
            <person name="Shah N."/>
            <person name="Pepin K."/>
            <person name="Bhonagiri V."/>
            <person name="Nash W."/>
            <person name="Johnson M."/>
            <person name="Thiruvilangam P."/>
            <person name="Wilson R."/>
        </authorList>
    </citation>
    <scope>NUCLEOTIDE SEQUENCE [LARGE SCALE GENOMIC DNA]</scope>
    <source>
        <strain>ATCC BAA-731 / CDC346-86 / RSK2980</strain>
    </source>
</reference>
<accession>A9MNJ0</accession>
<dbReference type="EMBL" id="CP000880">
    <property type="protein sequence ID" value="ABX21013.1"/>
    <property type="molecule type" value="Genomic_DNA"/>
</dbReference>
<dbReference type="STRING" id="41514.SARI_01107"/>
<dbReference type="KEGG" id="ses:SARI_01107"/>
<dbReference type="HOGENOM" id="CLU_133645_0_0_6"/>
<dbReference type="Proteomes" id="UP000002084">
    <property type="component" value="Chromosome"/>
</dbReference>
<dbReference type="GO" id="GO:0005886">
    <property type="term" value="C:plasma membrane"/>
    <property type="evidence" value="ECO:0007669"/>
    <property type="project" value="UniProtKB-SubCell"/>
</dbReference>
<dbReference type="HAMAP" id="MF_01071">
    <property type="entry name" value="UPF0266"/>
    <property type="match status" value="1"/>
</dbReference>
<dbReference type="InterPro" id="IPR009328">
    <property type="entry name" value="DUF986"/>
</dbReference>
<dbReference type="NCBIfam" id="NF002791">
    <property type="entry name" value="PRK02913.1"/>
    <property type="match status" value="1"/>
</dbReference>
<dbReference type="Pfam" id="PF06173">
    <property type="entry name" value="DUF986"/>
    <property type="match status" value="1"/>
</dbReference>
<dbReference type="PIRSF" id="PIRSF020687">
    <property type="entry name" value="UCP020687"/>
    <property type="match status" value="1"/>
</dbReference>
<protein>
    <recommendedName>
        <fullName evidence="1">UPF0266 membrane protein YobD</fullName>
    </recommendedName>
</protein>